<evidence type="ECO:0000250" key="1">
    <source>
        <dbReference type="UniProtKB" id="P08839"/>
    </source>
</evidence>
<evidence type="ECO:0000250" key="2">
    <source>
        <dbReference type="UniProtKB" id="P23533"/>
    </source>
</evidence>
<evidence type="ECO:0000305" key="3"/>
<name>PT1_STRCO</name>
<accession>Q9KZP1</accession>
<sequence>METTLRGVGVSHGVAIGEVRHMGTAVLEPPAKQIPAEDAEREQGRARKAVEAVAADLMARGNLAGGEAQAVLEAQAMMAQDPELLADVERRITVGSTAERAVYDAFAAYRALLAGAGEYLAGRVADLDDVRNRIVARLLGVPMPGVPDSDEPYVLIARDLAPADTALLDPTLVLGFVTEEGGPTSHSAILARALGVPAVVALPGAGEIPEGTVVAVDGSTGEIFVNPAEEKKARLAAEAAERKAALAAATGPGATSDGHKVPLLANIGGPADVPAAVEAGAEGVGLFRTEFLFLDDSANAPSEEKQITAYRQVLEAFPEGRVVVRVLDAGADKPLDFLTPGDEPNPALGVRGLRTLLDHPDVLRTQLTALAKAAEGLPVYLEVMAPMVADRADAKAFADACREAGLRAKFGAMVEIPSAALRARSVLQEVEFLSLGTNDLAQYTFAADRQVGAVSRLQDPWQPALLDLVALSAEAAKAEGKSCGVCGEAAADPLLACVLTGLGVTSLSMGAASLPYVRATLAKFTLAQCERAAAAARAADSAEEARTAAQAVLSGE</sequence>
<comment type="function">
    <text evidence="1">General (non sugar-specific) component of the phosphoenolpyruvate-dependent sugar phosphotransferase system (sugar PTS). This major carbohydrate active-transport system catalyzes the phosphorylation of incoming sugar substrates concomitantly with their translocation across the cell membrane. Enzyme I transfers the phosphoryl group from phosphoenolpyruvate (PEP) to the phosphoryl carrier protein (HPr).</text>
</comment>
<comment type="catalytic activity">
    <reaction evidence="1">
        <text>L-histidyl-[protein] + phosphoenolpyruvate = N(pros)-phospho-L-histidyl-[protein] + pyruvate</text>
        <dbReference type="Rhea" id="RHEA:23880"/>
        <dbReference type="Rhea" id="RHEA-COMP:9745"/>
        <dbReference type="Rhea" id="RHEA-COMP:9746"/>
        <dbReference type="ChEBI" id="CHEBI:15361"/>
        <dbReference type="ChEBI" id="CHEBI:29979"/>
        <dbReference type="ChEBI" id="CHEBI:58702"/>
        <dbReference type="ChEBI" id="CHEBI:64837"/>
        <dbReference type="EC" id="2.7.3.9"/>
    </reaction>
</comment>
<comment type="cofactor">
    <cofactor evidence="1">
        <name>Mg(2+)</name>
        <dbReference type="ChEBI" id="CHEBI:18420"/>
    </cofactor>
</comment>
<comment type="subunit">
    <text evidence="1">Homodimer.</text>
</comment>
<comment type="subcellular location">
    <subcellularLocation>
        <location evidence="3">Cytoplasm</location>
    </subcellularLocation>
</comment>
<comment type="domain">
    <text evidence="1">The N-terminal domain contains the HPr binding site, the central domain the pyrophosphate/phosphate carrier histidine, and the C-terminal domain the pyruvate binding site.</text>
</comment>
<comment type="miscellaneous">
    <text evidence="1">The reaction takes place in three steps, mediated by a phosphocarrier histidine residue located on the surface of the central domain. The two first partial reactions are catalyzed at an active site located on the N-terminal domain, and the third partial reaction is catalyzed at an active site located on the C-terminal domain. For catalytic turnover, the central domain swivels from the concave surface of the N-terminal domain to that of the C-terminal domain.</text>
</comment>
<comment type="similarity">
    <text evidence="3">Belongs to the PEP-utilizing enzyme family.</text>
</comment>
<feature type="chain" id="PRO_0000147091" description="Phosphoenolpyruvate-protein phosphotransferase">
    <location>
        <begin position="1"/>
        <end position="556"/>
    </location>
</feature>
<feature type="active site" description="Tele-phosphohistidine intermediate" evidence="1">
    <location>
        <position position="186"/>
    </location>
</feature>
<feature type="active site" description="Proton donor" evidence="1">
    <location>
        <position position="486"/>
    </location>
</feature>
<feature type="binding site" evidence="2">
    <location>
        <position position="288"/>
    </location>
    <ligand>
        <name>phosphoenolpyruvate</name>
        <dbReference type="ChEBI" id="CHEBI:58702"/>
    </ligand>
</feature>
<feature type="binding site" evidence="1">
    <location>
        <position position="325"/>
    </location>
    <ligand>
        <name>phosphoenolpyruvate</name>
        <dbReference type="ChEBI" id="CHEBI:58702"/>
    </ligand>
</feature>
<feature type="binding site" evidence="1">
    <location>
        <position position="415"/>
    </location>
    <ligand>
        <name>Mg(2+)</name>
        <dbReference type="ChEBI" id="CHEBI:18420"/>
    </ligand>
</feature>
<feature type="binding site" evidence="1">
    <location>
        <begin position="438"/>
        <end position="439"/>
    </location>
    <ligand>
        <name>phosphoenolpyruvate</name>
        <dbReference type="ChEBI" id="CHEBI:58702"/>
    </ligand>
</feature>
<feature type="binding site" evidence="1">
    <location>
        <position position="439"/>
    </location>
    <ligand>
        <name>Mg(2+)</name>
        <dbReference type="ChEBI" id="CHEBI:18420"/>
    </ligand>
</feature>
<feature type="binding site" evidence="2">
    <location>
        <position position="449"/>
    </location>
    <ligand>
        <name>phosphoenolpyruvate</name>
        <dbReference type="ChEBI" id="CHEBI:58702"/>
    </ligand>
</feature>
<organism>
    <name type="scientific">Streptomyces coelicolor (strain ATCC BAA-471 / A3(2) / M145)</name>
    <dbReference type="NCBI Taxonomy" id="100226"/>
    <lineage>
        <taxon>Bacteria</taxon>
        <taxon>Bacillati</taxon>
        <taxon>Actinomycetota</taxon>
        <taxon>Actinomycetes</taxon>
        <taxon>Kitasatosporales</taxon>
        <taxon>Streptomycetaceae</taxon>
        <taxon>Streptomyces</taxon>
        <taxon>Streptomyces albidoflavus group</taxon>
    </lineage>
</organism>
<proteinExistence type="inferred from homology"/>
<gene>
    <name type="primary">ptsI</name>
    <name type="ordered locus">SCO1391</name>
    <name type="ORF">SC1A8A.11</name>
</gene>
<reference key="1">
    <citation type="journal article" date="2002" name="Nature">
        <title>Complete genome sequence of the model actinomycete Streptomyces coelicolor A3(2).</title>
        <authorList>
            <person name="Bentley S.D."/>
            <person name="Chater K.F."/>
            <person name="Cerdeno-Tarraga A.-M."/>
            <person name="Challis G.L."/>
            <person name="Thomson N.R."/>
            <person name="James K.D."/>
            <person name="Harris D.E."/>
            <person name="Quail M.A."/>
            <person name="Kieser H."/>
            <person name="Harper D."/>
            <person name="Bateman A."/>
            <person name="Brown S."/>
            <person name="Chandra G."/>
            <person name="Chen C.W."/>
            <person name="Collins M."/>
            <person name="Cronin A."/>
            <person name="Fraser A."/>
            <person name="Goble A."/>
            <person name="Hidalgo J."/>
            <person name="Hornsby T."/>
            <person name="Howarth S."/>
            <person name="Huang C.-H."/>
            <person name="Kieser T."/>
            <person name="Larke L."/>
            <person name="Murphy L.D."/>
            <person name="Oliver K."/>
            <person name="O'Neil S."/>
            <person name="Rabbinowitsch E."/>
            <person name="Rajandream M.A."/>
            <person name="Rutherford K.M."/>
            <person name="Rutter S."/>
            <person name="Seeger K."/>
            <person name="Saunders D."/>
            <person name="Sharp S."/>
            <person name="Squares R."/>
            <person name="Squares S."/>
            <person name="Taylor K."/>
            <person name="Warren T."/>
            <person name="Wietzorrek A."/>
            <person name="Woodward J.R."/>
            <person name="Barrell B.G."/>
            <person name="Parkhill J."/>
            <person name="Hopwood D.A."/>
        </authorList>
    </citation>
    <scope>NUCLEOTIDE SEQUENCE [LARGE SCALE GENOMIC DNA]</scope>
    <source>
        <strain>ATCC BAA-471 / A3(2) / M145</strain>
    </source>
</reference>
<dbReference type="EC" id="2.7.3.9" evidence="1"/>
<dbReference type="EMBL" id="AL939108">
    <property type="protein sequence ID" value="CAB88887.1"/>
    <property type="molecule type" value="Genomic_DNA"/>
</dbReference>
<dbReference type="RefSeq" id="NP_625674.1">
    <property type="nucleotide sequence ID" value="NC_003888.3"/>
</dbReference>
<dbReference type="SMR" id="Q9KZP1"/>
<dbReference type="STRING" id="100226.gene:17758977"/>
<dbReference type="PaxDb" id="100226-SCO1391"/>
<dbReference type="KEGG" id="sco:SCO1391"/>
<dbReference type="PATRIC" id="fig|100226.15.peg.1399"/>
<dbReference type="eggNOG" id="COG1080">
    <property type="taxonomic scope" value="Bacteria"/>
</dbReference>
<dbReference type="HOGENOM" id="CLU_007308_7_0_11"/>
<dbReference type="InParanoid" id="Q9KZP1"/>
<dbReference type="OrthoDB" id="9765468at2"/>
<dbReference type="PhylomeDB" id="Q9KZP1"/>
<dbReference type="BRENDA" id="2.7.3.9">
    <property type="organism ID" value="5998"/>
</dbReference>
<dbReference type="Proteomes" id="UP000001973">
    <property type="component" value="Chromosome"/>
</dbReference>
<dbReference type="GO" id="GO:0005737">
    <property type="term" value="C:cytoplasm"/>
    <property type="evidence" value="ECO:0007669"/>
    <property type="project" value="UniProtKB-SubCell"/>
</dbReference>
<dbReference type="GO" id="GO:0016301">
    <property type="term" value="F:kinase activity"/>
    <property type="evidence" value="ECO:0007669"/>
    <property type="project" value="UniProtKB-KW"/>
</dbReference>
<dbReference type="GO" id="GO:0046872">
    <property type="term" value="F:metal ion binding"/>
    <property type="evidence" value="ECO:0007669"/>
    <property type="project" value="UniProtKB-KW"/>
</dbReference>
<dbReference type="GO" id="GO:0008965">
    <property type="term" value="F:phosphoenolpyruvate-protein phosphotransferase activity"/>
    <property type="evidence" value="ECO:0000318"/>
    <property type="project" value="GO_Central"/>
</dbReference>
<dbReference type="GO" id="GO:0015764">
    <property type="term" value="P:N-acetylglucosamine transport"/>
    <property type="evidence" value="ECO:0000318"/>
    <property type="project" value="GO_Central"/>
</dbReference>
<dbReference type="GO" id="GO:0009401">
    <property type="term" value="P:phosphoenolpyruvate-dependent sugar phosphotransferase system"/>
    <property type="evidence" value="ECO:0007669"/>
    <property type="project" value="UniProtKB-KW"/>
</dbReference>
<dbReference type="Gene3D" id="3.20.20.60">
    <property type="entry name" value="Phosphoenolpyruvate-binding domains"/>
    <property type="match status" value="1"/>
</dbReference>
<dbReference type="Gene3D" id="3.50.30.10">
    <property type="entry name" value="Phosphohistidine domain"/>
    <property type="match status" value="1"/>
</dbReference>
<dbReference type="Gene3D" id="1.10.274.10">
    <property type="entry name" value="PtsI, HPr-binding domain"/>
    <property type="match status" value="1"/>
</dbReference>
<dbReference type="InterPro" id="IPR008279">
    <property type="entry name" value="PEP-util_enz_mobile_dom"/>
</dbReference>
<dbReference type="InterPro" id="IPR050499">
    <property type="entry name" value="PEP-utilizing_PTS_enzyme"/>
</dbReference>
<dbReference type="InterPro" id="IPR018274">
    <property type="entry name" value="PEP_util_AS"/>
</dbReference>
<dbReference type="InterPro" id="IPR000121">
    <property type="entry name" value="PEP_util_C"/>
</dbReference>
<dbReference type="InterPro" id="IPR023151">
    <property type="entry name" value="PEP_util_CS"/>
</dbReference>
<dbReference type="InterPro" id="IPR036637">
    <property type="entry name" value="Phosphohistidine_dom_sf"/>
</dbReference>
<dbReference type="InterPro" id="IPR024692">
    <property type="entry name" value="PTS_EI"/>
</dbReference>
<dbReference type="InterPro" id="IPR006318">
    <property type="entry name" value="PTS_EI-like"/>
</dbReference>
<dbReference type="InterPro" id="IPR008731">
    <property type="entry name" value="PTS_EIN"/>
</dbReference>
<dbReference type="InterPro" id="IPR036618">
    <property type="entry name" value="PtsI_HPr-bd_sf"/>
</dbReference>
<dbReference type="InterPro" id="IPR015813">
    <property type="entry name" value="Pyrv/PenolPyrv_kinase-like_dom"/>
</dbReference>
<dbReference type="InterPro" id="IPR040442">
    <property type="entry name" value="Pyrv_kinase-like_dom_sf"/>
</dbReference>
<dbReference type="NCBIfam" id="TIGR01417">
    <property type="entry name" value="PTS_I_fam"/>
    <property type="match status" value="1"/>
</dbReference>
<dbReference type="PANTHER" id="PTHR46244">
    <property type="entry name" value="PHOSPHOENOLPYRUVATE-PROTEIN PHOSPHOTRANSFERASE"/>
    <property type="match status" value="1"/>
</dbReference>
<dbReference type="PANTHER" id="PTHR46244:SF3">
    <property type="entry name" value="PHOSPHOENOLPYRUVATE-PROTEIN PHOSPHOTRANSFERASE"/>
    <property type="match status" value="1"/>
</dbReference>
<dbReference type="Pfam" id="PF05524">
    <property type="entry name" value="PEP-utilisers_N"/>
    <property type="match status" value="1"/>
</dbReference>
<dbReference type="Pfam" id="PF00391">
    <property type="entry name" value="PEP-utilizers"/>
    <property type="match status" value="1"/>
</dbReference>
<dbReference type="Pfam" id="PF02896">
    <property type="entry name" value="PEP-utilizers_C"/>
    <property type="match status" value="1"/>
</dbReference>
<dbReference type="PIRSF" id="PIRSF000732">
    <property type="entry name" value="PTS_enzyme_I"/>
    <property type="match status" value="1"/>
</dbReference>
<dbReference type="PRINTS" id="PR01736">
    <property type="entry name" value="PHPHTRNFRASE"/>
</dbReference>
<dbReference type="SUPFAM" id="SSF47831">
    <property type="entry name" value="Enzyme I of the PEP:sugar phosphotransferase system HPr-binding (sub)domain"/>
    <property type="match status" value="1"/>
</dbReference>
<dbReference type="SUPFAM" id="SSF51621">
    <property type="entry name" value="Phosphoenolpyruvate/pyruvate domain"/>
    <property type="match status" value="1"/>
</dbReference>
<dbReference type="SUPFAM" id="SSF52009">
    <property type="entry name" value="Phosphohistidine domain"/>
    <property type="match status" value="1"/>
</dbReference>
<dbReference type="PROSITE" id="PS00742">
    <property type="entry name" value="PEP_ENZYMES_2"/>
    <property type="match status" value="1"/>
</dbReference>
<dbReference type="PROSITE" id="PS00370">
    <property type="entry name" value="PEP_ENZYMES_PHOS_SITE"/>
    <property type="match status" value="1"/>
</dbReference>
<keyword id="KW-0963">Cytoplasm</keyword>
<keyword id="KW-0418">Kinase</keyword>
<keyword id="KW-0460">Magnesium</keyword>
<keyword id="KW-0479">Metal-binding</keyword>
<keyword id="KW-0598">Phosphotransferase system</keyword>
<keyword id="KW-1185">Reference proteome</keyword>
<keyword id="KW-0762">Sugar transport</keyword>
<keyword id="KW-0808">Transferase</keyword>
<keyword id="KW-0813">Transport</keyword>
<protein>
    <recommendedName>
        <fullName evidence="1">Phosphoenolpyruvate-protein phosphotransferase</fullName>
        <ecNumber evidence="1">2.7.3.9</ecNumber>
    </recommendedName>
    <alternativeName>
        <fullName evidence="1">Phosphotransferase system, enzyme I</fullName>
    </alternativeName>
</protein>